<comment type="function">
    <text evidence="1">Peptidoglycan polymerase that catalyzes glycan chain elongation from lipid-linked precursors.</text>
</comment>
<comment type="catalytic activity">
    <reaction evidence="1">
        <text>[GlcNAc-(1-&gt;4)-Mur2Ac(oyl-L-Ala-gamma-D-Glu-L-Lys-D-Ala-D-Ala)](n)-di-trans,octa-cis-undecaprenyl diphosphate + beta-D-GlcNAc-(1-&gt;4)-Mur2Ac(oyl-L-Ala-gamma-D-Glu-L-Lys-D-Ala-D-Ala)-di-trans,octa-cis-undecaprenyl diphosphate = [GlcNAc-(1-&gt;4)-Mur2Ac(oyl-L-Ala-gamma-D-Glu-L-Lys-D-Ala-D-Ala)](n+1)-di-trans,octa-cis-undecaprenyl diphosphate + di-trans,octa-cis-undecaprenyl diphosphate + H(+)</text>
        <dbReference type="Rhea" id="RHEA:23708"/>
        <dbReference type="Rhea" id="RHEA-COMP:9602"/>
        <dbReference type="Rhea" id="RHEA-COMP:9603"/>
        <dbReference type="ChEBI" id="CHEBI:15378"/>
        <dbReference type="ChEBI" id="CHEBI:58405"/>
        <dbReference type="ChEBI" id="CHEBI:60033"/>
        <dbReference type="ChEBI" id="CHEBI:78435"/>
        <dbReference type="EC" id="2.4.99.28"/>
    </reaction>
</comment>
<comment type="pathway">
    <text evidence="1">Cell wall biogenesis; peptidoglycan biosynthesis.</text>
</comment>
<comment type="subcellular location">
    <subcellularLocation>
        <location evidence="1">Cell inner membrane</location>
        <topology evidence="1">Single-pass membrane protein</topology>
    </subcellularLocation>
</comment>
<comment type="similarity">
    <text evidence="1">Belongs to the glycosyltransferase 51 family.</text>
</comment>
<comment type="sequence caution" evidence="2">
    <conflict type="erroneous initiation">
        <sequence resource="EMBL-CDS" id="AAN56718"/>
    </conflict>
</comment>
<dbReference type="EC" id="2.4.99.28" evidence="1"/>
<dbReference type="EMBL" id="AE014299">
    <property type="protein sequence ID" value="AAN56718.1"/>
    <property type="status" value="ALT_INIT"/>
    <property type="molecule type" value="Genomic_DNA"/>
</dbReference>
<dbReference type="RefSeq" id="NP_719274.1">
    <property type="nucleotide sequence ID" value="NC_004347.2"/>
</dbReference>
<dbReference type="RefSeq" id="WP_011073518.1">
    <property type="nucleotide sequence ID" value="NZ_CP053946.1"/>
</dbReference>
<dbReference type="SMR" id="Q8EB02"/>
<dbReference type="STRING" id="211586.SO_3735"/>
<dbReference type="CAZy" id="GT51">
    <property type="family name" value="Glycosyltransferase Family 51"/>
</dbReference>
<dbReference type="PaxDb" id="211586-SO_3735"/>
<dbReference type="KEGG" id="son:SO_3735"/>
<dbReference type="PATRIC" id="fig|211586.12.peg.3618"/>
<dbReference type="eggNOG" id="COG0744">
    <property type="taxonomic scope" value="Bacteria"/>
</dbReference>
<dbReference type="HOGENOM" id="CLU_006354_1_1_6"/>
<dbReference type="OrthoDB" id="9766909at2"/>
<dbReference type="PhylomeDB" id="Q8EB02"/>
<dbReference type="UniPathway" id="UPA00219"/>
<dbReference type="Proteomes" id="UP000008186">
    <property type="component" value="Chromosome"/>
</dbReference>
<dbReference type="GO" id="GO:0009274">
    <property type="term" value="C:peptidoglycan-based cell wall"/>
    <property type="evidence" value="ECO:0007669"/>
    <property type="project" value="InterPro"/>
</dbReference>
<dbReference type="GO" id="GO:0005886">
    <property type="term" value="C:plasma membrane"/>
    <property type="evidence" value="ECO:0000318"/>
    <property type="project" value="GO_Central"/>
</dbReference>
<dbReference type="GO" id="GO:0016763">
    <property type="term" value="F:pentosyltransferase activity"/>
    <property type="evidence" value="ECO:0007669"/>
    <property type="project" value="InterPro"/>
</dbReference>
<dbReference type="GO" id="GO:0008955">
    <property type="term" value="F:peptidoglycan glycosyltransferase activity"/>
    <property type="evidence" value="ECO:0000318"/>
    <property type="project" value="GO_Central"/>
</dbReference>
<dbReference type="GO" id="GO:0071555">
    <property type="term" value="P:cell wall organization"/>
    <property type="evidence" value="ECO:0007669"/>
    <property type="project" value="UniProtKB-KW"/>
</dbReference>
<dbReference type="GO" id="GO:0009252">
    <property type="term" value="P:peptidoglycan biosynthetic process"/>
    <property type="evidence" value="ECO:0000318"/>
    <property type="project" value="GO_Central"/>
</dbReference>
<dbReference type="GO" id="GO:0008360">
    <property type="term" value="P:regulation of cell shape"/>
    <property type="evidence" value="ECO:0007669"/>
    <property type="project" value="UniProtKB-KW"/>
</dbReference>
<dbReference type="Gene3D" id="1.10.3810.10">
    <property type="entry name" value="Biosynthetic peptidoglycan transglycosylase-like"/>
    <property type="match status" value="1"/>
</dbReference>
<dbReference type="HAMAP" id="MF_00766">
    <property type="entry name" value="PGT_MtgA"/>
    <property type="match status" value="1"/>
</dbReference>
<dbReference type="InterPro" id="IPR001264">
    <property type="entry name" value="Glyco_trans_51"/>
</dbReference>
<dbReference type="InterPro" id="IPR023346">
    <property type="entry name" value="Lysozyme-like_dom_sf"/>
</dbReference>
<dbReference type="InterPro" id="IPR036950">
    <property type="entry name" value="PBP_transglycosylase"/>
</dbReference>
<dbReference type="InterPro" id="IPR011812">
    <property type="entry name" value="Pep_trsgly"/>
</dbReference>
<dbReference type="NCBIfam" id="TIGR02070">
    <property type="entry name" value="mono_pep_trsgly"/>
    <property type="match status" value="1"/>
</dbReference>
<dbReference type="PANTHER" id="PTHR30400:SF0">
    <property type="entry name" value="BIOSYNTHETIC PEPTIDOGLYCAN TRANSGLYCOSYLASE"/>
    <property type="match status" value="1"/>
</dbReference>
<dbReference type="PANTHER" id="PTHR30400">
    <property type="entry name" value="MONOFUNCTIONAL BIOSYNTHETIC PEPTIDOGLYCAN TRANSGLYCOSYLASE"/>
    <property type="match status" value="1"/>
</dbReference>
<dbReference type="Pfam" id="PF00912">
    <property type="entry name" value="Transgly"/>
    <property type="match status" value="1"/>
</dbReference>
<dbReference type="SUPFAM" id="SSF53955">
    <property type="entry name" value="Lysozyme-like"/>
    <property type="match status" value="1"/>
</dbReference>
<evidence type="ECO:0000255" key="1">
    <source>
        <dbReference type="HAMAP-Rule" id="MF_00766"/>
    </source>
</evidence>
<evidence type="ECO:0000305" key="2"/>
<feature type="chain" id="PRO_0000083145" description="Biosynthetic peptidoglycan transglycosylase">
    <location>
        <begin position="1"/>
        <end position="233"/>
    </location>
</feature>
<feature type="transmembrane region" description="Helical" evidence="1">
    <location>
        <begin position="7"/>
        <end position="27"/>
    </location>
</feature>
<organism>
    <name type="scientific">Shewanella oneidensis (strain ATCC 700550 / JCM 31522 / CIP 106686 / LMG 19005 / NCIMB 14063 / MR-1)</name>
    <dbReference type="NCBI Taxonomy" id="211586"/>
    <lineage>
        <taxon>Bacteria</taxon>
        <taxon>Pseudomonadati</taxon>
        <taxon>Pseudomonadota</taxon>
        <taxon>Gammaproteobacteria</taxon>
        <taxon>Alteromonadales</taxon>
        <taxon>Shewanellaceae</taxon>
        <taxon>Shewanella</taxon>
    </lineage>
</organism>
<name>MTGA_SHEON</name>
<sequence>MRGVKRVFTWLAKLVLGLFFASILSVVLLRFIDPPMWSWRIERALFPPAPITEVRHQWRSLEQISPELQLAVIAAEDQKFAGHSGFDLDAISSAIEYNQKGKKVRGASTLSQQAAKNLFMWSSRSFIRKGIEAWFTLLMELIWDKARILEVYLNIVEFGPGIYGAEAASKHYFGKSAAKLTRYEASLLAAALPNPWRYKVSPPSSYVEQRSAWIRKQMRQLGEVTLKKVNEAQ</sequence>
<proteinExistence type="inferred from homology"/>
<gene>
    <name evidence="1" type="primary">mtgA</name>
    <name type="ordered locus">SO_3735</name>
</gene>
<keyword id="KW-0997">Cell inner membrane</keyword>
<keyword id="KW-1003">Cell membrane</keyword>
<keyword id="KW-0133">Cell shape</keyword>
<keyword id="KW-0961">Cell wall biogenesis/degradation</keyword>
<keyword id="KW-0328">Glycosyltransferase</keyword>
<keyword id="KW-0472">Membrane</keyword>
<keyword id="KW-0573">Peptidoglycan synthesis</keyword>
<keyword id="KW-1185">Reference proteome</keyword>
<keyword id="KW-0808">Transferase</keyword>
<keyword id="KW-0812">Transmembrane</keyword>
<keyword id="KW-1133">Transmembrane helix</keyword>
<protein>
    <recommendedName>
        <fullName evidence="1">Biosynthetic peptidoglycan transglycosylase</fullName>
        <ecNumber evidence="1">2.4.99.28</ecNumber>
    </recommendedName>
    <alternativeName>
        <fullName evidence="1">Glycan polymerase</fullName>
    </alternativeName>
    <alternativeName>
        <fullName evidence="1">Peptidoglycan glycosyltransferase MtgA</fullName>
        <shortName evidence="1">PGT</shortName>
    </alternativeName>
</protein>
<accession>Q8EB02</accession>
<reference key="1">
    <citation type="journal article" date="2002" name="Nat. Biotechnol.">
        <title>Genome sequence of the dissimilatory metal ion-reducing bacterium Shewanella oneidensis.</title>
        <authorList>
            <person name="Heidelberg J.F."/>
            <person name="Paulsen I.T."/>
            <person name="Nelson K.E."/>
            <person name="Gaidos E.J."/>
            <person name="Nelson W.C."/>
            <person name="Read T.D."/>
            <person name="Eisen J.A."/>
            <person name="Seshadri R."/>
            <person name="Ward N.L."/>
            <person name="Methe B.A."/>
            <person name="Clayton R.A."/>
            <person name="Meyer T."/>
            <person name="Tsapin A."/>
            <person name="Scott J."/>
            <person name="Beanan M.J."/>
            <person name="Brinkac L.M."/>
            <person name="Daugherty S.C."/>
            <person name="DeBoy R.T."/>
            <person name="Dodson R.J."/>
            <person name="Durkin A.S."/>
            <person name="Haft D.H."/>
            <person name="Kolonay J.F."/>
            <person name="Madupu R."/>
            <person name="Peterson J.D."/>
            <person name="Umayam L.A."/>
            <person name="White O."/>
            <person name="Wolf A.M."/>
            <person name="Vamathevan J.J."/>
            <person name="Weidman J.F."/>
            <person name="Impraim M."/>
            <person name="Lee K."/>
            <person name="Berry K.J."/>
            <person name="Lee C."/>
            <person name="Mueller J."/>
            <person name="Khouri H.M."/>
            <person name="Gill J."/>
            <person name="Utterback T.R."/>
            <person name="McDonald L.A."/>
            <person name="Feldblyum T.V."/>
            <person name="Smith H.O."/>
            <person name="Venter J.C."/>
            <person name="Nealson K.H."/>
            <person name="Fraser C.M."/>
        </authorList>
    </citation>
    <scope>NUCLEOTIDE SEQUENCE [LARGE SCALE GENOMIC DNA]</scope>
    <source>
        <strain>ATCC 700550 / JCM 31522 / CIP 106686 / LMG 19005 / NCIMB 14063 / MR-1</strain>
    </source>
</reference>